<reference key="1">
    <citation type="journal article" date="2010" name="PLoS ONE">
        <title>The complete genome sequence of Cupriavidus metallidurans strain CH34, a master survivalist in harsh and anthropogenic environments.</title>
        <authorList>
            <person name="Janssen P.J."/>
            <person name="Van Houdt R."/>
            <person name="Moors H."/>
            <person name="Monsieurs P."/>
            <person name="Morin N."/>
            <person name="Michaux A."/>
            <person name="Benotmane M.A."/>
            <person name="Leys N."/>
            <person name="Vallaeys T."/>
            <person name="Lapidus A."/>
            <person name="Monchy S."/>
            <person name="Medigue C."/>
            <person name="Taghavi S."/>
            <person name="McCorkle S."/>
            <person name="Dunn J."/>
            <person name="van der Lelie D."/>
            <person name="Mergeay M."/>
        </authorList>
    </citation>
    <scope>NUCLEOTIDE SEQUENCE [LARGE SCALE GENOMIC DNA]</scope>
    <source>
        <strain>ATCC 43123 / DSM 2839 / NBRC 102507 / CH34</strain>
    </source>
</reference>
<evidence type="ECO:0000255" key="1">
    <source>
        <dbReference type="HAMAP-Rule" id="MF_01629"/>
    </source>
</evidence>
<accession>Q1LK07</accession>
<name>PDXH_CUPMC</name>
<organism>
    <name type="scientific">Cupriavidus metallidurans (strain ATCC 43123 / DSM 2839 / NBRC 102507 / CH34)</name>
    <name type="common">Ralstonia metallidurans</name>
    <dbReference type="NCBI Taxonomy" id="266264"/>
    <lineage>
        <taxon>Bacteria</taxon>
        <taxon>Pseudomonadati</taxon>
        <taxon>Pseudomonadota</taxon>
        <taxon>Betaproteobacteria</taxon>
        <taxon>Burkholderiales</taxon>
        <taxon>Burkholderiaceae</taxon>
        <taxon>Cupriavidus</taxon>
    </lineage>
</organism>
<protein>
    <recommendedName>
        <fullName evidence="1">Pyridoxine/pyridoxamine 5'-phosphate oxidase</fullName>
        <ecNumber evidence="1">1.4.3.5</ecNumber>
    </recommendedName>
    <alternativeName>
        <fullName evidence="1">PNP/PMP oxidase</fullName>
        <shortName evidence="1">PNPOx</shortName>
    </alternativeName>
    <alternativeName>
        <fullName evidence="1">Pyridoxal 5'-phosphate synthase</fullName>
    </alternativeName>
</protein>
<gene>
    <name evidence="1" type="primary">pdxH</name>
    <name type="ordered locus">Rmet_2642</name>
</gene>
<feature type="chain" id="PRO_0000255878" description="Pyridoxine/pyridoxamine 5'-phosphate oxidase">
    <location>
        <begin position="1"/>
        <end position="212"/>
    </location>
</feature>
<feature type="binding site" evidence="1">
    <location>
        <begin position="8"/>
        <end position="11"/>
    </location>
    <ligand>
        <name>substrate</name>
    </ligand>
</feature>
<feature type="binding site" evidence="1">
    <location>
        <begin position="61"/>
        <end position="66"/>
    </location>
    <ligand>
        <name>FMN</name>
        <dbReference type="ChEBI" id="CHEBI:58210"/>
    </ligand>
</feature>
<feature type="binding site" evidence="1">
    <location>
        <position position="66"/>
    </location>
    <ligand>
        <name>substrate</name>
    </ligand>
</feature>
<feature type="binding site" evidence="1">
    <location>
        <begin position="76"/>
        <end position="77"/>
    </location>
    <ligand>
        <name>FMN</name>
        <dbReference type="ChEBI" id="CHEBI:58210"/>
    </ligand>
</feature>
<feature type="binding site" evidence="1">
    <location>
        <position position="82"/>
    </location>
    <ligand>
        <name>FMN</name>
        <dbReference type="ChEBI" id="CHEBI:58210"/>
    </ligand>
</feature>
<feature type="binding site" evidence="1">
    <location>
        <position position="83"/>
    </location>
    <ligand>
        <name>FMN</name>
        <dbReference type="ChEBI" id="CHEBI:58210"/>
    </ligand>
</feature>
<feature type="binding site" evidence="1">
    <location>
        <position position="105"/>
    </location>
    <ligand>
        <name>FMN</name>
        <dbReference type="ChEBI" id="CHEBI:58210"/>
    </ligand>
</feature>
<feature type="binding site" evidence="1">
    <location>
        <position position="123"/>
    </location>
    <ligand>
        <name>substrate</name>
    </ligand>
</feature>
<feature type="binding site" evidence="1">
    <location>
        <position position="127"/>
    </location>
    <ligand>
        <name>substrate</name>
    </ligand>
</feature>
<feature type="binding site" evidence="1">
    <location>
        <position position="131"/>
    </location>
    <ligand>
        <name>substrate</name>
    </ligand>
</feature>
<feature type="binding site" evidence="1">
    <location>
        <begin position="140"/>
        <end position="141"/>
    </location>
    <ligand>
        <name>FMN</name>
        <dbReference type="ChEBI" id="CHEBI:58210"/>
    </ligand>
</feature>
<feature type="binding site" evidence="1">
    <location>
        <position position="184"/>
    </location>
    <ligand>
        <name>FMN</name>
        <dbReference type="ChEBI" id="CHEBI:58210"/>
    </ligand>
</feature>
<feature type="binding site" evidence="1">
    <location>
        <begin position="190"/>
        <end position="192"/>
    </location>
    <ligand>
        <name>substrate</name>
    </ligand>
</feature>
<feature type="binding site" evidence="1">
    <location>
        <position position="194"/>
    </location>
    <ligand>
        <name>FMN</name>
        <dbReference type="ChEBI" id="CHEBI:58210"/>
    </ligand>
</feature>
<keyword id="KW-0285">Flavoprotein</keyword>
<keyword id="KW-0288">FMN</keyword>
<keyword id="KW-0560">Oxidoreductase</keyword>
<keyword id="KW-0664">Pyridoxine biosynthesis</keyword>
<keyword id="KW-1185">Reference proteome</keyword>
<dbReference type="EC" id="1.4.3.5" evidence="1"/>
<dbReference type="EMBL" id="CP000352">
    <property type="protein sequence ID" value="ABF09519.1"/>
    <property type="molecule type" value="Genomic_DNA"/>
</dbReference>
<dbReference type="RefSeq" id="WP_011517218.1">
    <property type="nucleotide sequence ID" value="NC_007973.1"/>
</dbReference>
<dbReference type="SMR" id="Q1LK07"/>
<dbReference type="STRING" id="266264.Rmet_2642"/>
<dbReference type="KEGG" id="rme:Rmet_2642"/>
<dbReference type="eggNOG" id="COG0259">
    <property type="taxonomic scope" value="Bacteria"/>
</dbReference>
<dbReference type="HOGENOM" id="CLU_032263_2_2_4"/>
<dbReference type="UniPathway" id="UPA01068">
    <property type="reaction ID" value="UER00304"/>
</dbReference>
<dbReference type="UniPathway" id="UPA01068">
    <property type="reaction ID" value="UER00305"/>
</dbReference>
<dbReference type="Proteomes" id="UP000002429">
    <property type="component" value="Chromosome"/>
</dbReference>
<dbReference type="GO" id="GO:0010181">
    <property type="term" value="F:FMN binding"/>
    <property type="evidence" value="ECO:0007669"/>
    <property type="project" value="UniProtKB-UniRule"/>
</dbReference>
<dbReference type="GO" id="GO:0004733">
    <property type="term" value="F:pyridoxamine phosphate oxidase activity"/>
    <property type="evidence" value="ECO:0007669"/>
    <property type="project" value="UniProtKB-UniRule"/>
</dbReference>
<dbReference type="GO" id="GO:0008615">
    <property type="term" value="P:pyridoxine biosynthetic process"/>
    <property type="evidence" value="ECO:0007669"/>
    <property type="project" value="UniProtKB-KW"/>
</dbReference>
<dbReference type="FunFam" id="2.30.110.10:FF:000020">
    <property type="entry name" value="PNPO isoform 11"/>
    <property type="match status" value="1"/>
</dbReference>
<dbReference type="Gene3D" id="2.30.110.10">
    <property type="entry name" value="Electron Transport, Fmn-binding Protein, Chain A"/>
    <property type="match status" value="1"/>
</dbReference>
<dbReference type="HAMAP" id="MF_01629">
    <property type="entry name" value="PdxH"/>
    <property type="match status" value="1"/>
</dbReference>
<dbReference type="InterPro" id="IPR000659">
    <property type="entry name" value="Pyridox_Oxase"/>
</dbReference>
<dbReference type="InterPro" id="IPR019740">
    <property type="entry name" value="Pyridox_Oxase_CS"/>
</dbReference>
<dbReference type="InterPro" id="IPR011576">
    <property type="entry name" value="Pyridox_Oxase_N"/>
</dbReference>
<dbReference type="InterPro" id="IPR019576">
    <property type="entry name" value="Pyridoxamine_oxidase_dimer_C"/>
</dbReference>
<dbReference type="InterPro" id="IPR012349">
    <property type="entry name" value="Split_barrel_FMN-bd"/>
</dbReference>
<dbReference type="NCBIfam" id="TIGR00558">
    <property type="entry name" value="pdxH"/>
    <property type="match status" value="1"/>
</dbReference>
<dbReference type="NCBIfam" id="NF004231">
    <property type="entry name" value="PRK05679.1"/>
    <property type="match status" value="1"/>
</dbReference>
<dbReference type="PANTHER" id="PTHR10851:SF0">
    <property type="entry name" value="PYRIDOXINE-5'-PHOSPHATE OXIDASE"/>
    <property type="match status" value="1"/>
</dbReference>
<dbReference type="PANTHER" id="PTHR10851">
    <property type="entry name" value="PYRIDOXINE-5-PHOSPHATE OXIDASE"/>
    <property type="match status" value="1"/>
</dbReference>
<dbReference type="Pfam" id="PF10590">
    <property type="entry name" value="PNP_phzG_C"/>
    <property type="match status" value="1"/>
</dbReference>
<dbReference type="Pfam" id="PF01243">
    <property type="entry name" value="PNPOx_N"/>
    <property type="match status" value="1"/>
</dbReference>
<dbReference type="PIRSF" id="PIRSF000190">
    <property type="entry name" value="Pyd_amn-ph_oxd"/>
    <property type="match status" value="1"/>
</dbReference>
<dbReference type="SUPFAM" id="SSF50475">
    <property type="entry name" value="FMN-binding split barrel"/>
    <property type="match status" value="1"/>
</dbReference>
<dbReference type="PROSITE" id="PS01064">
    <property type="entry name" value="PYRIDOX_OXIDASE"/>
    <property type="match status" value="1"/>
</dbReference>
<sequence length="212" mass="24190">MTQLADLRRNYMLSALSETDVAPDPIRQFQSWFDEAMQAKLPEPNAMTLATVGADGQPSARIVLLKGMDADGFTFFTNYESRKGVDLLANPRAALLFHWVQLERQIRVEGIVEKVEDAESDAYYASRPLGSRLGAWASEQSREVAGRDVIEAREADFRNKFGENPPRPPHWGGYRLKPTWIEFWQGRPSRLHDRIAYRQNADGNWQIVRLSP</sequence>
<comment type="function">
    <text evidence="1">Catalyzes the oxidation of either pyridoxine 5'-phosphate (PNP) or pyridoxamine 5'-phosphate (PMP) into pyridoxal 5'-phosphate (PLP).</text>
</comment>
<comment type="catalytic activity">
    <reaction evidence="1">
        <text>pyridoxamine 5'-phosphate + O2 + H2O = pyridoxal 5'-phosphate + H2O2 + NH4(+)</text>
        <dbReference type="Rhea" id="RHEA:15817"/>
        <dbReference type="ChEBI" id="CHEBI:15377"/>
        <dbReference type="ChEBI" id="CHEBI:15379"/>
        <dbReference type="ChEBI" id="CHEBI:16240"/>
        <dbReference type="ChEBI" id="CHEBI:28938"/>
        <dbReference type="ChEBI" id="CHEBI:58451"/>
        <dbReference type="ChEBI" id="CHEBI:597326"/>
        <dbReference type="EC" id="1.4.3.5"/>
    </reaction>
</comment>
<comment type="catalytic activity">
    <reaction evidence="1">
        <text>pyridoxine 5'-phosphate + O2 = pyridoxal 5'-phosphate + H2O2</text>
        <dbReference type="Rhea" id="RHEA:15149"/>
        <dbReference type="ChEBI" id="CHEBI:15379"/>
        <dbReference type="ChEBI" id="CHEBI:16240"/>
        <dbReference type="ChEBI" id="CHEBI:58589"/>
        <dbReference type="ChEBI" id="CHEBI:597326"/>
        <dbReference type="EC" id="1.4.3.5"/>
    </reaction>
</comment>
<comment type="cofactor">
    <cofactor evidence="1">
        <name>FMN</name>
        <dbReference type="ChEBI" id="CHEBI:58210"/>
    </cofactor>
    <text evidence="1">Binds 1 FMN per subunit.</text>
</comment>
<comment type="pathway">
    <text evidence="1">Cofactor metabolism; pyridoxal 5'-phosphate salvage; pyridoxal 5'-phosphate from pyridoxamine 5'-phosphate: step 1/1.</text>
</comment>
<comment type="pathway">
    <text evidence="1">Cofactor metabolism; pyridoxal 5'-phosphate salvage; pyridoxal 5'-phosphate from pyridoxine 5'-phosphate: step 1/1.</text>
</comment>
<comment type="subunit">
    <text evidence="1">Homodimer.</text>
</comment>
<comment type="similarity">
    <text evidence="1">Belongs to the pyridoxamine 5'-phosphate oxidase family.</text>
</comment>
<proteinExistence type="inferred from homology"/>